<feature type="chain" id="PRO_1000077702" description="Diaminopimelate epimerase">
    <location>
        <begin position="1"/>
        <end position="276"/>
    </location>
</feature>
<feature type="active site" description="Proton donor" evidence="1">
    <location>
        <position position="75"/>
    </location>
</feature>
<feature type="active site" description="Proton acceptor" evidence="1">
    <location>
        <position position="219"/>
    </location>
</feature>
<feature type="binding site" evidence="1">
    <location>
        <position position="13"/>
    </location>
    <ligand>
        <name>substrate</name>
    </ligand>
</feature>
<feature type="binding site" evidence="1">
    <location>
        <position position="46"/>
    </location>
    <ligand>
        <name>substrate</name>
    </ligand>
</feature>
<feature type="binding site" evidence="1">
    <location>
        <position position="66"/>
    </location>
    <ligand>
        <name>substrate</name>
    </ligand>
</feature>
<feature type="binding site" evidence="1">
    <location>
        <begin position="76"/>
        <end position="77"/>
    </location>
    <ligand>
        <name>substrate</name>
    </ligand>
</feature>
<feature type="binding site" evidence="1">
    <location>
        <position position="159"/>
    </location>
    <ligand>
        <name>substrate</name>
    </ligand>
</feature>
<feature type="binding site" evidence="1">
    <location>
        <position position="192"/>
    </location>
    <ligand>
        <name>substrate</name>
    </ligand>
</feature>
<feature type="binding site" evidence="1">
    <location>
        <begin position="210"/>
        <end position="211"/>
    </location>
    <ligand>
        <name>substrate</name>
    </ligand>
</feature>
<feature type="binding site" evidence="1">
    <location>
        <begin position="220"/>
        <end position="221"/>
    </location>
    <ligand>
        <name>substrate</name>
    </ligand>
</feature>
<feature type="site" description="Could be important to modulate the pK values of the two catalytic cysteine residues" evidence="1">
    <location>
        <position position="161"/>
    </location>
</feature>
<feature type="site" description="Could be important to modulate the pK values of the two catalytic cysteine residues" evidence="1">
    <location>
        <position position="210"/>
    </location>
</feature>
<feature type="site" description="Important for dimerization" evidence="1">
    <location>
        <position position="270"/>
    </location>
</feature>
<accession>B0KQ41</accession>
<reference key="1">
    <citation type="submission" date="2008-01" db="EMBL/GenBank/DDBJ databases">
        <title>Complete sequence of Pseudomonas putida GB-1.</title>
        <authorList>
            <consortium name="US DOE Joint Genome Institute"/>
            <person name="Copeland A."/>
            <person name="Lucas S."/>
            <person name="Lapidus A."/>
            <person name="Barry K."/>
            <person name="Glavina del Rio T."/>
            <person name="Dalin E."/>
            <person name="Tice H."/>
            <person name="Pitluck S."/>
            <person name="Bruce D."/>
            <person name="Goodwin L."/>
            <person name="Chertkov O."/>
            <person name="Brettin T."/>
            <person name="Detter J.C."/>
            <person name="Han C."/>
            <person name="Kuske C.R."/>
            <person name="Schmutz J."/>
            <person name="Larimer F."/>
            <person name="Land M."/>
            <person name="Hauser L."/>
            <person name="Kyrpides N."/>
            <person name="Kim E."/>
            <person name="McCarthy J.K."/>
            <person name="Richardson P."/>
        </authorList>
    </citation>
    <scope>NUCLEOTIDE SEQUENCE [LARGE SCALE GENOMIC DNA]</scope>
    <source>
        <strain>GB-1</strain>
    </source>
</reference>
<sequence length="276" mass="30295">MLLRFTKMHGLGNDFMVLDLVSQHAHIQPKHAKQWGDRHTGIGFDQLLIVEAPNNPEVDFRYRIFNADGSEVEQCGNGARCFARFVLDKRLTAKKRIRVETKSGIIVLDVQNDGQVSVDMGPPRFIPAEIPFVADAQALSYPLEVDGQLHSIAAVSMGNPHAVLRVDDVRTAPVHELGPKIENHPRFPQRVNAGFIQVIDRHRANLRVWERGAGETQACGTGACAAAVAAISQGWMDSPVSLDLPGGRLHIEWAGPGKPVLMTGPAVRVYEGQVRL</sequence>
<organism>
    <name type="scientific">Pseudomonas putida (strain GB-1)</name>
    <dbReference type="NCBI Taxonomy" id="76869"/>
    <lineage>
        <taxon>Bacteria</taxon>
        <taxon>Pseudomonadati</taxon>
        <taxon>Pseudomonadota</taxon>
        <taxon>Gammaproteobacteria</taxon>
        <taxon>Pseudomonadales</taxon>
        <taxon>Pseudomonadaceae</taxon>
        <taxon>Pseudomonas</taxon>
    </lineage>
</organism>
<proteinExistence type="inferred from homology"/>
<name>DAPF_PSEPG</name>
<keyword id="KW-0028">Amino-acid biosynthesis</keyword>
<keyword id="KW-0963">Cytoplasm</keyword>
<keyword id="KW-0413">Isomerase</keyword>
<keyword id="KW-0457">Lysine biosynthesis</keyword>
<gene>
    <name evidence="1" type="primary">dapF</name>
    <name type="ordered locus">PputGB1_5289</name>
</gene>
<evidence type="ECO:0000255" key="1">
    <source>
        <dbReference type="HAMAP-Rule" id="MF_00197"/>
    </source>
</evidence>
<comment type="function">
    <text evidence="1">Catalyzes the stereoinversion of LL-2,6-diaminopimelate (L,L-DAP) to meso-diaminopimelate (meso-DAP), a precursor of L-lysine and an essential component of the bacterial peptidoglycan.</text>
</comment>
<comment type="catalytic activity">
    <reaction evidence="1">
        <text>(2S,6S)-2,6-diaminopimelate = meso-2,6-diaminopimelate</text>
        <dbReference type="Rhea" id="RHEA:15393"/>
        <dbReference type="ChEBI" id="CHEBI:57609"/>
        <dbReference type="ChEBI" id="CHEBI:57791"/>
        <dbReference type="EC" id="5.1.1.7"/>
    </reaction>
</comment>
<comment type="pathway">
    <text evidence="1">Amino-acid biosynthesis; L-lysine biosynthesis via DAP pathway; DL-2,6-diaminopimelate from LL-2,6-diaminopimelate: step 1/1.</text>
</comment>
<comment type="subunit">
    <text evidence="1">Homodimer.</text>
</comment>
<comment type="subcellular location">
    <subcellularLocation>
        <location evidence="1">Cytoplasm</location>
    </subcellularLocation>
</comment>
<comment type="similarity">
    <text evidence="1">Belongs to the diaminopimelate epimerase family.</text>
</comment>
<dbReference type="EC" id="5.1.1.7" evidence="1"/>
<dbReference type="EMBL" id="CP000926">
    <property type="protein sequence ID" value="ABZ01171.1"/>
    <property type="molecule type" value="Genomic_DNA"/>
</dbReference>
<dbReference type="RefSeq" id="WP_012274780.1">
    <property type="nucleotide sequence ID" value="NC_010322.1"/>
</dbReference>
<dbReference type="SMR" id="B0KQ41"/>
<dbReference type="KEGG" id="ppg:PputGB1_5289"/>
<dbReference type="eggNOG" id="COG0253">
    <property type="taxonomic scope" value="Bacteria"/>
</dbReference>
<dbReference type="HOGENOM" id="CLU_053306_1_1_6"/>
<dbReference type="UniPathway" id="UPA00034">
    <property type="reaction ID" value="UER00025"/>
</dbReference>
<dbReference type="Proteomes" id="UP000002157">
    <property type="component" value="Chromosome"/>
</dbReference>
<dbReference type="GO" id="GO:0005829">
    <property type="term" value="C:cytosol"/>
    <property type="evidence" value="ECO:0007669"/>
    <property type="project" value="TreeGrafter"/>
</dbReference>
<dbReference type="GO" id="GO:0008837">
    <property type="term" value="F:diaminopimelate epimerase activity"/>
    <property type="evidence" value="ECO:0007669"/>
    <property type="project" value="UniProtKB-UniRule"/>
</dbReference>
<dbReference type="GO" id="GO:0009089">
    <property type="term" value="P:lysine biosynthetic process via diaminopimelate"/>
    <property type="evidence" value="ECO:0007669"/>
    <property type="project" value="UniProtKB-UniRule"/>
</dbReference>
<dbReference type="FunFam" id="3.10.310.10:FF:000001">
    <property type="entry name" value="Diaminopimelate epimerase"/>
    <property type="match status" value="1"/>
</dbReference>
<dbReference type="FunFam" id="3.10.310.10:FF:000004">
    <property type="entry name" value="Diaminopimelate epimerase"/>
    <property type="match status" value="1"/>
</dbReference>
<dbReference type="Gene3D" id="3.10.310.10">
    <property type="entry name" value="Diaminopimelate Epimerase, Chain A, domain 1"/>
    <property type="match status" value="2"/>
</dbReference>
<dbReference type="HAMAP" id="MF_00197">
    <property type="entry name" value="DAP_epimerase"/>
    <property type="match status" value="1"/>
</dbReference>
<dbReference type="InterPro" id="IPR018510">
    <property type="entry name" value="DAP_epimerase_AS"/>
</dbReference>
<dbReference type="InterPro" id="IPR001653">
    <property type="entry name" value="DAP_epimerase_DapF"/>
</dbReference>
<dbReference type="NCBIfam" id="TIGR00652">
    <property type="entry name" value="DapF"/>
    <property type="match status" value="1"/>
</dbReference>
<dbReference type="PANTHER" id="PTHR31689:SF0">
    <property type="entry name" value="DIAMINOPIMELATE EPIMERASE"/>
    <property type="match status" value="1"/>
</dbReference>
<dbReference type="PANTHER" id="PTHR31689">
    <property type="entry name" value="DIAMINOPIMELATE EPIMERASE, CHLOROPLASTIC"/>
    <property type="match status" value="1"/>
</dbReference>
<dbReference type="Pfam" id="PF01678">
    <property type="entry name" value="DAP_epimerase"/>
    <property type="match status" value="2"/>
</dbReference>
<dbReference type="SUPFAM" id="SSF54506">
    <property type="entry name" value="Diaminopimelate epimerase-like"/>
    <property type="match status" value="1"/>
</dbReference>
<dbReference type="PROSITE" id="PS01326">
    <property type="entry name" value="DAP_EPIMERASE"/>
    <property type="match status" value="1"/>
</dbReference>
<protein>
    <recommendedName>
        <fullName evidence="1">Diaminopimelate epimerase</fullName>
        <shortName evidence="1">DAP epimerase</shortName>
        <ecNumber evidence="1">5.1.1.7</ecNumber>
    </recommendedName>
    <alternativeName>
        <fullName evidence="1">PLP-independent amino acid racemase</fullName>
    </alternativeName>
</protein>